<evidence type="ECO:0000250" key="1"/>
<evidence type="ECO:0000305" key="2"/>
<sequence length="155" mass="17355">MSRRGTVEEKTAKSDPIYRNRLVNMLVNRILKHGKKSLAYQIIYRAVKKIQQKTETNPLSVLRQAIRGVTPDIAVKARRVGGSTHQVPIEIGSTQGKALAIRWLLGAARKRPGRNMAFKLSSELVDAAKGSGDAIRKKEETHRMAEANRAFAHFR</sequence>
<reference key="1">
    <citation type="submission" date="2004-08" db="EMBL/GenBank/DDBJ databases">
        <title>A partial chloroplast genome of Silene latifolia.</title>
        <authorList>
            <person name="Kejnovsky E."/>
            <person name="Kubat Z."/>
            <person name="Hobza R."/>
            <person name="Lengerova M."/>
            <person name="Sato S."/>
            <person name="Tabata S."/>
            <person name="Fukui K."/>
            <person name="Matsunaga S."/>
            <person name="Vyskot B."/>
        </authorList>
    </citation>
    <scope>NUCLEOTIDE SEQUENCE [GENOMIC DNA]</scope>
</reference>
<name>RR7_SILLA</name>
<comment type="function">
    <text evidence="1">One of the primary rRNA binding proteins, it binds directly to 16S rRNA where it nucleates assembly of the head domain of the 30S subunit.</text>
</comment>
<comment type="subunit">
    <text>Part of the 30S ribosomal subunit.</text>
</comment>
<comment type="subcellular location">
    <subcellularLocation>
        <location>Plastid</location>
        <location>Chloroplast</location>
    </subcellularLocation>
</comment>
<comment type="similarity">
    <text evidence="2">Belongs to the universal ribosomal protein uS7 family.</text>
</comment>
<dbReference type="EMBL" id="AB189069">
    <property type="protein sequence ID" value="BAD93473.1"/>
    <property type="molecule type" value="Genomic_DNA"/>
</dbReference>
<dbReference type="RefSeq" id="YP_005089620.1">
    <property type="nucleotide sequence ID" value="NC_016730.1"/>
</dbReference>
<dbReference type="RefSeq" id="YP_005089633.1">
    <property type="nucleotide sequence ID" value="NC_016730.1"/>
</dbReference>
<dbReference type="SMR" id="Q589A4"/>
<dbReference type="GeneID" id="11541120"/>
<dbReference type="GeneID" id="11541152"/>
<dbReference type="GO" id="GO:0009507">
    <property type="term" value="C:chloroplast"/>
    <property type="evidence" value="ECO:0007669"/>
    <property type="project" value="UniProtKB-SubCell"/>
</dbReference>
<dbReference type="GO" id="GO:0015935">
    <property type="term" value="C:small ribosomal subunit"/>
    <property type="evidence" value="ECO:0007669"/>
    <property type="project" value="InterPro"/>
</dbReference>
<dbReference type="GO" id="GO:0019843">
    <property type="term" value="F:rRNA binding"/>
    <property type="evidence" value="ECO:0007669"/>
    <property type="project" value="UniProtKB-UniRule"/>
</dbReference>
<dbReference type="GO" id="GO:0003735">
    <property type="term" value="F:structural constituent of ribosome"/>
    <property type="evidence" value="ECO:0007669"/>
    <property type="project" value="InterPro"/>
</dbReference>
<dbReference type="GO" id="GO:0006412">
    <property type="term" value="P:translation"/>
    <property type="evidence" value="ECO:0007669"/>
    <property type="project" value="UniProtKB-UniRule"/>
</dbReference>
<dbReference type="CDD" id="cd14871">
    <property type="entry name" value="uS7_Chloroplast"/>
    <property type="match status" value="1"/>
</dbReference>
<dbReference type="FunFam" id="1.10.455.10:FF:000001">
    <property type="entry name" value="30S ribosomal protein S7"/>
    <property type="match status" value="1"/>
</dbReference>
<dbReference type="Gene3D" id="1.10.455.10">
    <property type="entry name" value="Ribosomal protein S7 domain"/>
    <property type="match status" value="1"/>
</dbReference>
<dbReference type="HAMAP" id="MF_00480_B">
    <property type="entry name" value="Ribosomal_uS7_B"/>
    <property type="match status" value="1"/>
</dbReference>
<dbReference type="InterPro" id="IPR000235">
    <property type="entry name" value="Ribosomal_uS7"/>
</dbReference>
<dbReference type="InterPro" id="IPR005717">
    <property type="entry name" value="Ribosomal_uS7_bac/org-type"/>
</dbReference>
<dbReference type="InterPro" id="IPR020606">
    <property type="entry name" value="Ribosomal_uS7_CS"/>
</dbReference>
<dbReference type="InterPro" id="IPR023798">
    <property type="entry name" value="Ribosomal_uS7_dom"/>
</dbReference>
<dbReference type="InterPro" id="IPR036823">
    <property type="entry name" value="Ribosomal_uS7_dom_sf"/>
</dbReference>
<dbReference type="NCBIfam" id="TIGR01029">
    <property type="entry name" value="rpsG_bact"/>
    <property type="match status" value="1"/>
</dbReference>
<dbReference type="PANTHER" id="PTHR11205">
    <property type="entry name" value="RIBOSOMAL PROTEIN S7"/>
    <property type="match status" value="1"/>
</dbReference>
<dbReference type="Pfam" id="PF00177">
    <property type="entry name" value="Ribosomal_S7"/>
    <property type="match status" value="1"/>
</dbReference>
<dbReference type="PIRSF" id="PIRSF002122">
    <property type="entry name" value="RPS7p_RPS7a_RPS5e_RPS7o"/>
    <property type="match status" value="1"/>
</dbReference>
<dbReference type="SUPFAM" id="SSF47973">
    <property type="entry name" value="Ribosomal protein S7"/>
    <property type="match status" value="1"/>
</dbReference>
<dbReference type="PROSITE" id="PS00052">
    <property type="entry name" value="RIBOSOMAL_S7"/>
    <property type="match status" value="1"/>
</dbReference>
<proteinExistence type="inferred from homology"/>
<keyword id="KW-0150">Chloroplast</keyword>
<keyword id="KW-0934">Plastid</keyword>
<keyword id="KW-0687">Ribonucleoprotein</keyword>
<keyword id="KW-0689">Ribosomal protein</keyword>
<keyword id="KW-0694">RNA-binding</keyword>
<keyword id="KW-0699">rRNA-binding</keyword>
<protein>
    <recommendedName>
        <fullName evidence="2">Small ribosomal subunit protein uS7c</fullName>
    </recommendedName>
    <alternativeName>
        <fullName>30S ribosomal protein S7, chloroplastic</fullName>
    </alternativeName>
</protein>
<gene>
    <name type="primary">rps7</name>
</gene>
<geneLocation type="chloroplast"/>
<accession>Q589A4</accession>
<organism>
    <name type="scientific">Silene latifolia</name>
    <name type="common">White campion</name>
    <name type="synonym">Bladder campion</name>
    <dbReference type="NCBI Taxonomy" id="37657"/>
    <lineage>
        <taxon>Eukaryota</taxon>
        <taxon>Viridiplantae</taxon>
        <taxon>Streptophyta</taxon>
        <taxon>Embryophyta</taxon>
        <taxon>Tracheophyta</taxon>
        <taxon>Spermatophyta</taxon>
        <taxon>Magnoliopsida</taxon>
        <taxon>eudicotyledons</taxon>
        <taxon>Gunneridae</taxon>
        <taxon>Pentapetalae</taxon>
        <taxon>Caryophyllales</taxon>
        <taxon>Caryophyllaceae</taxon>
        <taxon>Sileneae</taxon>
        <taxon>Silene</taxon>
        <taxon>Silene subgen. Behenantha</taxon>
        <taxon>Silene sect. Melandrium</taxon>
    </lineage>
</organism>
<feature type="chain" id="PRO_0000124503" description="Small ribosomal subunit protein uS7c">
    <location>
        <begin position="1"/>
        <end position="155"/>
    </location>
</feature>